<sequence>MSQFDHQHLSDTEEKQELKPPSMYKVIINNDDYTPMDFVIEVLMRFFKMDQERATDTMLQVHYKGKAVCGVYSAEIAETKVVQVNQYARENQHPLLCTMEQE</sequence>
<gene>
    <name evidence="1" type="primary">clpS</name>
    <name type="ordered locus">IL0675</name>
</gene>
<evidence type="ECO:0000255" key="1">
    <source>
        <dbReference type="HAMAP-Rule" id="MF_00302"/>
    </source>
</evidence>
<evidence type="ECO:0000256" key="2">
    <source>
        <dbReference type="SAM" id="MobiDB-lite"/>
    </source>
</evidence>
<organism>
    <name type="scientific">Idiomarina loihiensis (strain ATCC BAA-735 / DSM 15497 / L2-TR)</name>
    <dbReference type="NCBI Taxonomy" id="283942"/>
    <lineage>
        <taxon>Bacteria</taxon>
        <taxon>Pseudomonadati</taxon>
        <taxon>Pseudomonadota</taxon>
        <taxon>Gammaproteobacteria</taxon>
        <taxon>Alteromonadales</taxon>
        <taxon>Idiomarinaceae</taxon>
        <taxon>Idiomarina</taxon>
    </lineage>
</organism>
<reference key="1">
    <citation type="journal article" date="2004" name="Proc. Natl. Acad. Sci. U.S.A.">
        <title>Genome sequence of the deep-sea gamma-proteobacterium Idiomarina loihiensis reveals amino acid fermentation as a source of carbon and energy.</title>
        <authorList>
            <person name="Hou S."/>
            <person name="Saw J.H."/>
            <person name="Lee K.S."/>
            <person name="Freitas T.A."/>
            <person name="Belisle C."/>
            <person name="Kawarabayasi Y."/>
            <person name="Donachie S.P."/>
            <person name="Pikina A."/>
            <person name="Galperin M.Y."/>
            <person name="Koonin E.V."/>
            <person name="Makarova K.S."/>
            <person name="Omelchenko M.V."/>
            <person name="Sorokin A."/>
            <person name="Wolf Y.I."/>
            <person name="Li Q.X."/>
            <person name="Keum Y.S."/>
            <person name="Campbell S."/>
            <person name="Denery J."/>
            <person name="Aizawa S."/>
            <person name="Shibata S."/>
            <person name="Malahoff A."/>
            <person name="Alam M."/>
        </authorList>
    </citation>
    <scope>NUCLEOTIDE SEQUENCE [LARGE SCALE GENOMIC DNA]</scope>
    <source>
        <strain>ATCC BAA-735 / DSM 15497 / L2-TR</strain>
    </source>
</reference>
<proteinExistence type="inferred from homology"/>
<accession>Q5R0C3</accession>
<comment type="function">
    <text evidence="1">Involved in the modulation of the specificity of the ClpAP-mediated ATP-dependent protein degradation.</text>
</comment>
<comment type="subunit">
    <text evidence="1">Binds to the N-terminal domain of the chaperone ClpA.</text>
</comment>
<comment type="similarity">
    <text evidence="1">Belongs to the ClpS family.</text>
</comment>
<dbReference type="EMBL" id="AE017340">
    <property type="protein sequence ID" value="AAV81516.1"/>
    <property type="molecule type" value="Genomic_DNA"/>
</dbReference>
<dbReference type="RefSeq" id="WP_011233927.1">
    <property type="nucleotide sequence ID" value="NC_006512.1"/>
</dbReference>
<dbReference type="SMR" id="Q5R0C3"/>
<dbReference type="STRING" id="283942.IL0675"/>
<dbReference type="GeneID" id="78252143"/>
<dbReference type="KEGG" id="ilo:IL0675"/>
<dbReference type="eggNOG" id="COG2127">
    <property type="taxonomic scope" value="Bacteria"/>
</dbReference>
<dbReference type="HOGENOM" id="CLU_134358_2_1_6"/>
<dbReference type="OrthoDB" id="9796121at2"/>
<dbReference type="Proteomes" id="UP000001171">
    <property type="component" value="Chromosome"/>
</dbReference>
<dbReference type="GO" id="GO:0030163">
    <property type="term" value="P:protein catabolic process"/>
    <property type="evidence" value="ECO:0007669"/>
    <property type="project" value="InterPro"/>
</dbReference>
<dbReference type="GO" id="GO:0006508">
    <property type="term" value="P:proteolysis"/>
    <property type="evidence" value="ECO:0007669"/>
    <property type="project" value="UniProtKB-UniRule"/>
</dbReference>
<dbReference type="FunFam" id="3.30.1390.10:FF:000002">
    <property type="entry name" value="ATP-dependent Clp protease adapter protein ClpS"/>
    <property type="match status" value="1"/>
</dbReference>
<dbReference type="Gene3D" id="3.30.1390.10">
    <property type="match status" value="1"/>
</dbReference>
<dbReference type="HAMAP" id="MF_00302">
    <property type="entry name" value="ClpS"/>
    <property type="match status" value="1"/>
</dbReference>
<dbReference type="InterPro" id="IPR022935">
    <property type="entry name" value="ClpS"/>
</dbReference>
<dbReference type="InterPro" id="IPR003769">
    <property type="entry name" value="ClpS_core"/>
</dbReference>
<dbReference type="InterPro" id="IPR014719">
    <property type="entry name" value="Ribosomal_bL12_C/ClpS-like"/>
</dbReference>
<dbReference type="NCBIfam" id="NF000669">
    <property type="entry name" value="PRK00033.1-2"/>
    <property type="match status" value="1"/>
</dbReference>
<dbReference type="NCBIfam" id="NF000670">
    <property type="entry name" value="PRK00033.1-3"/>
    <property type="match status" value="1"/>
</dbReference>
<dbReference type="NCBIfam" id="NF000672">
    <property type="entry name" value="PRK00033.1-5"/>
    <property type="match status" value="1"/>
</dbReference>
<dbReference type="PANTHER" id="PTHR33473:SF19">
    <property type="entry name" value="ATP-DEPENDENT CLP PROTEASE ADAPTER PROTEIN CLPS"/>
    <property type="match status" value="1"/>
</dbReference>
<dbReference type="PANTHER" id="PTHR33473">
    <property type="entry name" value="ATP-DEPENDENT CLP PROTEASE ADAPTER PROTEIN CLPS1, CHLOROPLASTIC"/>
    <property type="match status" value="1"/>
</dbReference>
<dbReference type="Pfam" id="PF02617">
    <property type="entry name" value="ClpS"/>
    <property type="match status" value="1"/>
</dbReference>
<dbReference type="SUPFAM" id="SSF54736">
    <property type="entry name" value="ClpS-like"/>
    <property type="match status" value="1"/>
</dbReference>
<keyword id="KW-1185">Reference proteome</keyword>
<feature type="chain" id="PRO_0000215716" description="ATP-dependent Clp protease adapter protein ClpS">
    <location>
        <begin position="1"/>
        <end position="102"/>
    </location>
</feature>
<feature type="region of interest" description="Disordered" evidence="2">
    <location>
        <begin position="1"/>
        <end position="21"/>
    </location>
</feature>
<feature type="compositionally biased region" description="Basic and acidic residues" evidence="2">
    <location>
        <begin position="1"/>
        <end position="18"/>
    </location>
</feature>
<name>CLPS_IDILO</name>
<protein>
    <recommendedName>
        <fullName evidence="1">ATP-dependent Clp protease adapter protein ClpS</fullName>
    </recommendedName>
</protein>